<accession>Q4P4X6</accession>
<accession>A0A0D1DW68</accession>
<gene>
    <name type="ORF">UMAG_12282</name>
</gene>
<protein>
    <recommendedName>
        <fullName evidence="1">Eukaryotic translation initiation factor 3 subunit K</fullName>
        <shortName evidence="1">eIF3k</shortName>
    </recommendedName>
    <alternativeName>
        <fullName evidence="1">eIF-3 p25</fullName>
    </alternativeName>
</protein>
<name>EIF3K_MYCMD</name>
<keyword id="KW-0963">Cytoplasm</keyword>
<keyword id="KW-0396">Initiation factor</keyword>
<keyword id="KW-0648">Protein biosynthesis</keyword>
<keyword id="KW-1185">Reference proteome</keyword>
<organism>
    <name type="scientific">Mycosarcoma maydis</name>
    <name type="common">Corn smut fungus</name>
    <name type="synonym">Ustilago maydis</name>
    <dbReference type="NCBI Taxonomy" id="5270"/>
    <lineage>
        <taxon>Eukaryota</taxon>
        <taxon>Fungi</taxon>
        <taxon>Dikarya</taxon>
        <taxon>Basidiomycota</taxon>
        <taxon>Ustilaginomycotina</taxon>
        <taxon>Ustilaginomycetes</taxon>
        <taxon>Ustilaginales</taxon>
        <taxon>Ustilaginaceae</taxon>
        <taxon>Mycosarcoma</taxon>
    </lineage>
</organism>
<reference key="1">
    <citation type="journal article" date="2006" name="Nature">
        <title>Insights from the genome of the biotrophic fungal plant pathogen Ustilago maydis.</title>
        <authorList>
            <person name="Kaemper J."/>
            <person name="Kahmann R."/>
            <person name="Boelker M."/>
            <person name="Ma L.-J."/>
            <person name="Brefort T."/>
            <person name="Saville B.J."/>
            <person name="Banuett F."/>
            <person name="Kronstad J.W."/>
            <person name="Gold S.E."/>
            <person name="Mueller O."/>
            <person name="Perlin M.H."/>
            <person name="Woesten H.A.B."/>
            <person name="de Vries R."/>
            <person name="Ruiz-Herrera J."/>
            <person name="Reynaga-Pena C.G."/>
            <person name="Snetselaar K."/>
            <person name="McCann M."/>
            <person name="Perez-Martin J."/>
            <person name="Feldbruegge M."/>
            <person name="Basse C.W."/>
            <person name="Steinberg G."/>
            <person name="Ibeas J.I."/>
            <person name="Holloman W."/>
            <person name="Guzman P."/>
            <person name="Farman M.L."/>
            <person name="Stajich J.E."/>
            <person name="Sentandreu R."/>
            <person name="Gonzalez-Prieto J.M."/>
            <person name="Kennell J.C."/>
            <person name="Molina L."/>
            <person name="Schirawski J."/>
            <person name="Mendoza-Mendoza A."/>
            <person name="Greilinger D."/>
            <person name="Muench K."/>
            <person name="Roessel N."/>
            <person name="Scherer M."/>
            <person name="Vranes M."/>
            <person name="Ladendorf O."/>
            <person name="Vincon V."/>
            <person name="Fuchs U."/>
            <person name="Sandrock B."/>
            <person name="Meng S."/>
            <person name="Ho E.C.H."/>
            <person name="Cahill M.J."/>
            <person name="Boyce K.J."/>
            <person name="Klose J."/>
            <person name="Klosterman S.J."/>
            <person name="Deelstra H.J."/>
            <person name="Ortiz-Castellanos L."/>
            <person name="Li W."/>
            <person name="Sanchez-Alonso P."/>
            <person name="Schreier P.H."/>
            <person name="Haeuser-Hahn I."/>
            <person name="Vaupel M."/>
            <person name="Koopmann E."/>
            <person name="Friedrich G."/>
            <person name="Voss H."/>
            <person name="Schlueter T."/>
            <person name="Margolis J."/>
            <person name="Platt D."/>
            <person name="Swimmer C."/>
            <person name="Gnirke A."/>
            <person name="Chen F."/>
            <person name="Vysotskaia V."/>
            <person name="Mannhaupt G."/>
            <person name="Gueldener U."/>
            <person name="Muensterkoetter M."/>
            <person name="Haase D."/>
            <person name="Oesterheld M."/>
            <person name="Mewes H.-W."/>
            <person name="Mauceli E.W."/>
            <person name="DeCaprio D."/>
            <person name="Wade C.M."/>
            <person name="Butler J."/>
            <person name="Young S.K."/>
            <person name="Jaffe D.B."/>
            <person name="Calvo S.E."/>
            <person name="Nusbaum C."/>
            <person name="Galagan J.E."/>
            <person name="Birren B.W."/>
        </authorList>
    </citation>
    <scope>NUCLEOTIDE SEQUENCE [LARGE SCALE GENOMIC DNA]</scope>
    <source>
        <strain>DSM 14603 / FGSC 9021 / UM521</strain>
    </source>
</reference>
<reference key="2">
    <citation type="submission" date="2014-09" db="EMBL/GenBank/DDBJ databases">
        <authorList>
            <person name="Gueldener U."/>
            <person name="Muensterkoetter M."/>
            <person name="Walter M.C."/>
            <person name="Mannhaupt G."/>
            <person name="Kahmann R."/>
        </authorList>
    </citation>
    <scope>GENOME REANNOTATION</scope>
    <source>
        <strain>DSM 14603 / FGSC 9021 / UM521</strain>
    </source>
</reference>
<feature type="chain" id="PRO_0000365064" description="Eukaryotic translation initiation factor 3 subunit K">
    <location>
        <begin position="1"/>
        <end position="283"/>
    </location>
</feature>
<feature type="domain" description="PCI" evidence="2">
    <location>
        <begin position="52"/>
        <end position="263"/>
    </location>
</feature>
<feature type="region of interest" description="Disordered" evidence="3">
    <location>
        <begin position="114"/>
        <end position="135"/>
    </location>
</feature>
<evidence type="ECO:0000255" key="1">
    <source>
        <dbReference type="HAMAP-Rule" id="MF_03010"/>
    </source>
</evidence>
<evidence type="ECO:0000255" key="2">
    <source>
        <dbReference type="PROSITE-ProRule" id="PRU01185"/>
    </source>
</evidence>
<evidence type="ECO:0000256" key="3">
    <source>
        <dbReference type="SAM" id="MobiDB-lite"/>
    </source>
</evidence>
<sequence length="283" mass="30997">MASETASASQWVSPSSRPQHIEQLISGVDRYNPQNLDVLHDYLAQQLDDGSYDLLANLAILKLYQFNPADFNYVVVINILLKALVAAPLPDFNLCISLLGEAPLPTVPVKAEKEATTTDADNAGSLSGDDDDDEVVEKPKDVASAGHLTDPLIVRLSQLSTLLFQARFREFWSTLASESYSDVRDYAAKISEFENAARRVALNSVKGSFTSISEKRIANYLNLSGSQLAEFINAQDGWKLADGTVSVPANPDNEIKATVIREEISLDQMHKFLAQAQSPLLRA</sequence>
<comment type="function">
    <text evidence="1">Component of the eukaryotic translation initiation factor 3 (eIF-3) complex, which is involved in protein synthesis of a specialized repertoire of mRNAs and, together with other initiation factors, stimulates binding of mRNA and methionyl-tRNAi to the 40S ribosome. The eIF-3 complex specifically targets and initiates translation of a subset of mRNAs involved in cell proliferation.</text>
</comment>
<comment type="subunit">
    <text evidence="1">Component of the eukaryotic translation initiation factor 3 (eIF-3) complex.</text>
</comment>
<comment type="subcellular location">
    <subcellularLocation>
        <location evidence="1">Cytoplasm</location>
    </subcellularLocation>
</comment>
<comment type="similarity">
    <text evidence="1">Belongs to the eIF-3 subunit K family.</text>
</comment>
<proteinExistence type="inferred from homology"/>
<dbReference type="EMBL" id="CM003156">
    <property type="protein sequence ID" value="KIS66775.1"/>
    <property type="molecule type" value="Genomic_DNA"/>
</dbReference>
<dbReference type="RefSeq" id="XP_011391778.1">
    <property type="nucleotide sequence ID" value="XM_011393476.1"/>
</dbReference>
<dbReference type="SMR" id="Q4P4X6"/>
<dbReference type="STRING" id="237631.Q4P4X6"/>
<dbReference type="EnsemblFungi" id="KIS66775">
    <property type="protein sequence ID" value="KIS66775"/>
    <property type="gene ID" value="UMAG_12282"/>
</dbReference>
<dbReference type="GeneID" id="23568028"/>
<dbReference type="KEGG" id="uma:UMAG_12282"/>
<dbReference type="VEuPathDB" id="FungiDB:UMAG_12282"/>
<dbReference type="eggNOG" id="KOG3252">
    <property type="taxonomic scope" value="Eukaryota"/>
</dbReference>
<dbReference type="InParanoid" id="Q4P4X6"/>
<dbReference type="OrthoDB" id="337745at2759"/>
<dbReference type="Proteomes" id="UP000000561">
    <property type="component" value="Chromosome 17"/>
</dbReference>
<dbReference type="GO" id="GO:0016282">
    <property type="term" value="C:eukaryotic 43S preinitiation complex"/>
    <property type="evidence" value="ECO:0007669"/>
    <property type="project" value="UniProtKB-UniRule"/>
</dbReference>
<dbReference type="GO" id="GO:0033290">
    <property type="term" value="C:eukaryotic 48S preinitiation complex"/>
    <property type="evidence" value="ECO:0007669"/>
    <property type="project" value="UniProtKB-UniRule"/>
</dbReference>
<dbReference type="GO" id="GO:0005852">
    <property type="term" value="C:eukaryotic translation initiation factor 3 complex"/>
    <property type="evidence" value="ECO:0000318"/>
    <property type="project" value="GO_Central"/>
</dbReference>
<dbReference type="GO" id="GO:0043022">
    <property type="term" value="F:ribosome binding"/>
    <property type="evidence" value="ECO:0007669"/>
    <property type="project" value="InterPro"/>
</dbReference>
<dbReference type="GO" id="GO:0003723">
    <property type="term" value="F:RNA binding"/>
    <property type="evidence" value="ECO:0007669"/>
    <property type="project" value="UniProtKB-UniRule"/>
</dbReference>
<dbReference type="GO" id="GO:0003743">
    <property type="term" value="F:translation initiation factor activity"/>
    <property type="evidence" value="ECO:0007669"/>
    <property type="project" value="UniProtKB-UniRule"/>
</dbReference>
<dbReference type="GO" id="GO:0001732">
    <property type="term" value="P:formation of cytoplasmic translation initiation complex"/>
    <property type="evidence" value="ECO:0007669"/>
    <property type="project" value="UniProtKB-UniRule"/>
</dbReference>
<dbReference type="GO" id="GO:0006446">
    <property type="term" value="P:regulation of translational initiation"/>
    <property type="evidence" value="ECO:0007669"/>
    <property type="project" value="InterPro"/>
</dbReference>
<dbReference type="FunFam" id="1.10.10.10:FF:000389">
    <property type="entry name" value="Eukaryotic translation initiation factor 3 subunit K"/>
    <property type="match status" value="1"/>
</dbReference>
<dbReference type="FunFam" id="1.25.40.250:FF:000001">
    <property type="entry name" value="Eukaryotic translation initiation factor 3 subunit K"/>
    <property type="match status" value="1"/>
</dbReference>
<dbReference type="Gene3D" id="1.25.40.250">
    <property type="entry name" value="ARM repeat, domain 1"/>
    <property type="match status" value="1"/>
</dbReference>
<dbReference type="Gene3D" id="1.10.10.10">
    <property type="entry name" value="Winged helix-like DNA-binding domain superfamily/Winged helix DNA-binding domain"/>
    <property type="match status" value="1"/>
</dbReference>
<dbReference type="HAMAP" id="MF_03010">
    <property type="entry name" value="eIF3k"/>
    <property type="match status" value="1"/>
</dbReference>
<dbReference type="InterPro" id="IPR016024">
    <property type="entry name" value="ARM-type_fold"/>
</dbReference>
<dbReference type="InterPro" id="IPR033464">
    <property type="entry name" value="CSN8_PSD8_EIF3K"/>
</dbReference>
<dbReference type="InterPro" id="IPR009374">
    <property type="entry name" value="eIF3k"/>
</dbReference>
<dbReference type="InterPro" id="IPR000717">
    <property type="entry name" value="PCI_dom"/>
</dbReference>
<dbReference type="InterPro" id="IPR016020">
    <property type="entry name" value="Transl_init_fac_sub12_N_euk"/>
</dbReference>
<dbReference type="InterPro" id="IPR036388">
    <property type="entry name" value="WH-like_DNA-bd_sf"/>
</dbReference>
<dbReference type="InterPro" id="IPR036390">
    <property type="entry name" value="WH_DNA-bd_sf"/>
</dbReference>
<dbReference type="PANTHER" id="PTHR13022">
    <property type="entry name" value="EUKARYOTIC TRANSLATION INITIATION FACTOR 3 SUBUNIT 11"/>
    <property type="match status" value="1"/>
</dbReference>
<dbReference type="PANTHER" id="PTHR13022:SF0">
    <property type="entry name" value="EUKARYOTIC TRANSLATION INITIATION FACTOR 3 SUBUNIT K"/>
    <property type="match status" value="1"/>
</dbReference>
<dbReference type="Pfam" id="PF10075">
    <property type="entry name" value="CSN8_PSD8_EIF3K"/>
    <property type="match status" value="1"/>
</dbReference>
<dbReference type="SUPFAM" id="SSF48371">
    <property type="entry name" value="ARM repeat"/>
    <property type="match status" value="1"/>
</dbReference>
<dbReference type="SUPFAM" id="SSF46785">
    <property type="entry name" value="Winged helix' DNA-binding domain"/>
    <property type="match status" value="1"/>
</dbReference>
<dbReference type="PROSITE" id="PS50250">
    <property type="entry name" value="PCI"/>
    <property type="match status" value="1"/>
</dbReference>